<protein>
    <recommendedName>
        <fullName evidence="1">Phosphoribosylformylglycinamidine cyclo-ligase</fullName>
        <ecNumber evidence="1">6.3.3.1</ecNumber>
    </recommendedName>
    <alternativeName>
        <fullName evidence="1">AIR synthase</fullName>
    </alternativeName>
    <alternativeName>
        <fullName evidence="1">AIRS</fullName>
    </alternativeName>
    <alternativeName>
        <fullName evidence="1">Phosphoribosyl-aminoimidazole synthetase</fullName>
    </alternativeName>
</protein>
<dbReference type="EC" id="6.3.3.1" evidence="1"/>
<dbReference type="EMBL" id="CP000230">
    <property type="protein sequence ID" value="ABC22967.1"/>
    <property type="status" value="ALT_INIT"/>
    <property type="molecule type" value="Genomic_DNA"/>
</dbReference>
<dbReference type="RefSeq" id="WP_014626325.1">
    <property type="nucleotide sequence ID" value="NC_007643.1"/>
</dbReference>
<dbReference type="RefSeq" id="YP_427254.1">
    <property type="nucleotide sequence ID" value="NC_007643.1"/>
</dbReference>
<dbReference type="SMR" id="Q2RSC8"/>
<dbReference type="STRING" id="269796.Rru_A2167"/>
<dbReference type="EnsemblBacteria" id="ABC22967">
    <property type="protein sequence ID" value="ABC22967"/>
    <property type="gene ID" value="Rru_A2167"/>
</dbReference>
<dbReference type="KEGG" id="rru:Rru_A2167"/>
<dbReference type="PATRIC" id="fig|269796.9.peg.2261"/>
<dbReference type="eggNOG" id="COG0150">
    <property type="taxonomic scope" value="Bacteria"/>
</dbReference>
<dbReference type="HOGENOM" id="CLU_047116_0_0_5"/>
<dbReference type="PhylomeDB" id="Q2RSC8"/>
<dbReference type="UniPathway" id="UPA00074">
    <property type="reaction ID" value="UER00129"/>
</dbReference>
<dbReference type="Proteomes" id="UP000001929">
    <property type="component" value="Chromosome"/>
</dbReference>
<dbReference type="GO" id="GO:0005829">
    <property type="term" value="C:cytosol"/>
    <property type="evidence" value="ECO:0007669"/>
    <property type="project" value="TreeGrafter"/>
</dbReference>
<dbReference type="GO" id="GO:0005524">
    <property type="term" value="F:ATP binding"/>
    <property type="evidence" value="ECO:0007669"/>
    <property type="project" value="UniProtKB-KW"/>
</dbReference>
<dbReference type="GO" id="GO:0004637">
    <property type="term" value="F:phosphoribosylamine-glycine ligase activity"/>
    <property type="evidence" value="ECO:0007669"/>
    <property type="project" value="TreeGrafter"/>
</dbReference>
<dbReference type="GO" id="GO:0004641">
    <property type="term" value="F:phosphoribosylformylglycinamidine cyclo-ligase activity"/>
    <property type="evidence" value="ECO:0007669"/>
    <property type="project" value="UniProtKB-UniRule"/>
</dbReference>
<dbReference type="GO" id="GO:0006189">
    <property type="term" value="P:'de novo' IMP biosynthetic process"/>
    <property type="evidence" value="ECO:0007669"/>
    <property type="project" value="UniProtKB-UniRule"/>
</dbReference>
<dbReference type="GO" id="GO:0046084">
    <property type="term" value="P:adenine biosynthetic process"/>
    <property type="evidence" value="ECO:0007669"/>
    <property type="project" value="TreeGrafter"/>
</dbReference>
<dbReference type="CDD" id="cd02196">
    <property type="entry name" value="PurM"/>
    <property type="match status" value="1"/>
</dbReference>
<dbReference type="FunFam" id="3.30.1330.10:FF:000001">
    <property type="entry name" value="Phosphoribosylformylglycinamidine cyclo-ligase"/>
    <property type="match status" value="1"/>
</dbReference>
<dbReference type="FunFam" id="3.90.650.10:FF:000007">
    <property type="entry name" value="Trifunctional purine biosynthetic protein adenosine-3"/>
    <property type="match status" value="1"/>
</dbReference>
<dbReference type="Gene3D" id="3.90.650.10">
    <property type="entry name" value="PurM-like C-terminal domain"/>
    <property type="match status" value="1"/>
</dbReference>
<dbReference type="Gene3D" id="3.30.1330.10">
    <property type="entry name" value="PurM-like, N-terminal domain"/>
    <property type="match status" value="1"/>
</dbReference>
<dbReference type="HAMAP" id="MF_00741">
    <property type="entry name" value="AIRS"/>
    <property type="match status" value="1"/>
</dbReference>
<dbReference type="InterPro" id="IPR010918">
    <property type="entry name" value="PurM-like_C_dom"/>
</dbReference>
<dbReference type="InterPro" id="IPR036676">
    <property type="entry name" value="PurM-like_C_sf"/>
</dbReference>
<dbReference type="InterPro" id="IPR016188">
    <property type="entry name" value="PurM-like_N"/>
</dbReference>
<dbReference type="InterPro" id="IPR036921">
    <property type="entry name" value="PurM-like_N_sf"/>
</dbReference>
<dbReference type="InterPro" id="IPR004733">
    <property type="entry name" value="PurM_cligase"/>
</dbReference>
<dbReference type="NCBIfam" id="TIGR00878">
    <property type="entry name" value="purM"/>
    <property type="match status" value="1"/>
</dbReference>
<dbReference type="PANTHER" id="PTHR10520:SF12">
    <property type="entry name" value="TRIFUNCTIONAL PURINE BIOSYNTHETIC PROTEIN ADENOSINE-3"/>
    <property type="match status" value="1"/>
</dbReference>
<dbReference type="PANTHER" id="PTHR10520">
    <property type="entry name" value="TRIFUNCTIONAL PURINE BIOSYNTHETIC PROTEIN ADENOSINE-3-RELATED"/>
    <property type="match status" value="1"/>
</dbReference>
<dbReference type="Pfam" id="PF00586">
    <property type="entry name" value="AIRS"/>
    <property type="match status" value="1"/>
</dbReference>
<dbReference type="Pfam" id="PF02769">
    <property type="entry name" value="AIRS_C"/>
    <property type="match status" value="1"/>
</dbReference>
<dbReference type="SUPFAM" id="SSF56042">
    <property type="entry name" value="PurM C-terminal domain-like"/>
    <property type="match status" value="1"/>
</dbReference>
<dbReference type="SUPFAM" id="SSF55326">
    <property type="entry name" value="PurM N-terminal domain-like"/>
    <property type="match status" value="1"/>
</dbReference>
<gene>
    <name evidence="1" type="primary">purM</name>
    <name type="ordered locus">Rru_A2167</name>
</gene>
<keyword id="KW-0067">ATP-binding</keyword>
<keyword id="KW-0963">Cytoplasm</keyword>
<keyword id="KW-0436">Ligase</keyword>
<keyword id="KW-0547">Nucleotide-binding</keyword>
<keyword id="KW-0658">Purine biosynthesis</keyword>
<keyword id="KW-1185">Reference proteome</keyword>
<comment type="catalytic activity">
    <reaction evidence="1">
        <text>2-formamido-N(1)-(5-O-phospho-beta-D-ribosyl)acetamidine + ATP = 5-amino-1-(5-phospho-beta-D-ribosyl)imidazole + ADP + phosphate + H(+)</text>
        <dbReference type="Rhea" id="RHEA:23032"/>
        <dbReference type="ChEBI" id="CHEBI:15378"/>
        <dbReference type="ChEBI" id="CHEBI:30616"/>
        <dbReference type="ChEBI" id="CHEBI:43474"/>
        <dbReference type="ChEBI" id="CHEBI:137981"/>
        <dbReference type="ChEBI" id="CHEBI:147287"/>
        <dbReference type="ChEBI" id="CHEBI:456216"/>
        <dbReference type="EC" id="6.3.3.1"/>
    </reaction>
</comment>
<comment type="pathway">
    <text evidence="1">Purine metabolism; IMP biosynthesis via de novo pathway; 5-amino-1-(5-phospho-D-ribosyl)imidazole from N(2)-formyl-N(1)-(5-phospho-D-ribosyl)glycinamide: step 2/2.</text>
</comment>
<comment type="subcellular location">
    <subcellularLocation>
        <location evidence="1">Cytoplasm</location>
    </subcellularLocation>
</comment>
<comment type="similarity">
    <text evidence="1">Belongs to the AIR synthase family.</text>
</comment>
<comment type="sequence caution" evidence="2">
    <conflict type="erroneous initiation">
        <sequence resource="EMBL-CDS" id="ABC22967"/>
    </conflict>
</comment>
<evidence type="ECO:0000255" key="1">
    <source>
        <dbReference type="HAMAP-Rule" id="MF_00741"/>
    </source>
</evidence>
<evidence type="ECO:0000305" key="2"/>
<organism>
    <name type="scientific">Rhodospirillum rubrum (strain ATCC 11170 / ATH 1.1.1 / DSM 467 / LMG 4362 / NCIMB 8255 / S1)</name>
    <dbReference type="NCBI Taxonomy" id="269796"/>
    <lineage>
        <taxon>Bacteria</taxon>
        <taxon>Pseudomonadati</taxon>
        <taxon>Pseudomonadota</taxon>
        <taxon>Alphaproteobacteria</taxon>
        <taxon>Rhodospirillales</taxon>
        <taxon>Rhodospirillaceae</taxon>
        <taxon>Rhodospirillum</taxon>
    </lineage>
</organism>
<name>PUR5_RHORT</name>
<sequence>MKNEVAISTSHLDAGATGTGLTYKDAGVDIDSGNALVQAIKPLAASTKRPGADASLGGFGAIFDLAAAGYSDPLLITATDGVGTKLKIALDSGIHDSVGIDLVAMCVNDLVVQGGEPLLFLDYFATSRLQVPVASAVVKGIAEGCLQAGCALVGGETAEMPGMYGNNDYDLAGFAVGAVERSQLLTDDRIGLGDVLLGLASSGVHSNGFSLVRRIVERSGLAWDAPAPFAPETTLARALLTPTRIYVKSCLALHRAGLVHGFAHITGGGFWENIPRVLPQGACAHLDGLSWPFPPVFRWLMDQGGVSAHEMARTFNCGIGMVVAVPADKAEAAIALLGEHGETVHRLGTIAARGEGEAVIIDHLDEAFAR</sequence>
<accession>Q2RSC8</accession>
<reference key="1">
    <citation type="journal article" date="2011" name="Stand. Genomic Sci.">
        <title>Complete genome sequence of Rhodospirillum rubrum type strain (S1).</title>
        <authorList>
            <person name="Munk A.C."/>
            <person name="Copeland A."/>
            <person name="Lucas S."/>
            <person name="Lapidus A."/>
            <person name="Del Rio T.G."/>
            <person name="Barry K."/>
            <person name="Detter J.C."/>
            <person name="Hammon N."/>
            <person name="Israni S."/>
            <person name="Pitluck S."/>
            <person name="Brettin T."/>
            <person name="Bruce D."/>
            <person name="Han C."/>
            <person name="Tapia R."/>
            <person name="Gilna P."/>
            <person name="Schmutz J."/>
            <person name="Larimer F."/>
            <person name="Land M."/>
            <person name="Kyrpides N.C."/>
            <person name="Mavromatis K."/>
            <person name="Richardson P."/>
            <person name="Rohde M."/>
            <person name="Goeker M."/>
            <person name="Klenk H.P."/>
            <person name="Zhang Y."/>
            <person name="Roberts G.P."/>
            <person name="Reslewic S."/>
            <person name="Schwartz D.C."/>
        </authorList>
    </citation>
    <scope>NUCLEOTIDE SEQUENCE [LARGE SCALE GENOMIC DNA]</scope>
    <source>
        <strain>ATCC 11170 / ATH 1.1.1 / DSM 467 / LMG 4362 / NCIMB 8255 / S1</strain>
    </source>
</reference>
<proteinExistence type="inferred from homology"/>
<feature type="chain" id="PRO_0000258397" description="Phosphoribosylformylglycinamidine cyclo-ligase">
    <location>
        <begin position="1"/>
        <end position="370"/>
    </location>
</feature>